<evidence type="ECO:0000255" key="1">
    <source>
        <dbReference type="HAMAP-Rule" id="MF_00170"/>
    </source>
</evidence>
<evidence type="ECO:0000305" key="2"/>
<dbReference type="EC" id="5.3.1.6" evidence="1"/>
<dbReference type="EMBL" id="AP008231">
    <property type="protein sequence ID" value="BAD79129.1"/>
    <property type="status" value="ALT_INIT"/>
    <property type="molecule type" value="Genomic_DNA"/>
</dbReference>
<dbReference type="SMR" id="Q5N3J1"/>
<dbReference type="KEGG" id="syc:syc0939_d"/>
<dbReference type="eggNOG" id="COG0120">
    <property type="taxonomic scope" value="Bacteria"/>
</dbReference>
<dbReference type="UniPathway" id="UPA00115">
    <property type="reaction ID" value="UER00412"/>
</dbReference>
<dbReference type="Proteomes" id="UP000001175">
    <property type="component" value="Chromosome"/>
</dbReference>
<dbReference type="GO" id="GO:0005829">
    <property type="term" value="C:cytosol"/>
    <property type="evidence" value="ECO:0007669"/>
    <property type="project" value="TreeGrafter"/>
</dbReference>
<dbReference type="GO" id="GO:0004751">
    <property type="term" value="F:ribose-5-phosphate isomerase activity"/>
    <property type="evidence" value="ECO:0007669"/>
    <property type="project" value="UniProtKB-UniRule"/>
</dbReference>
<dbReference type="GO" id="GO:0006014">
    <property type="term" value="P:D-ribose metabolic process"/>
    <property type="evidence" value="ECO:0007669"/>
    <property type="project" value="TreeGrafter"/>
</dbReference>
<dbReference type="GO" id="GO:0009052">
    <property type="term" value="P:pentose-phosphate shunt, non-oxidative branch"/>
    <property type="evidence" value="ECO:0007669"/>
    <property type="project" value="UniProtKB-UniRule"/>
</dbReference>
<dbReference type="CDD" id="cd01398">
    <property type="entry name" value="RPI_A"/>
    <property type="match status" value="1"/>
</dbReference>
<dbReference type="FunFam" id="3.30.70.260:FF:000018">
    <property type="entry name" value="Ribose-5-phosphate isomerase A"/>
    <property type="match status" value="1"/>
</dbReference>
<dbReference type="FunFam" id="3.40.50.1360:FF:000001">
    <property type="entry name" value="Ribose-5-phosphate isomerase A"/>
    <property type="match status" value="1"/>
</dbReference>
<dbReference type="Gene3D" id="3.30.70.260">
    <property type="match status" value="1"/>
</dbReference>
<dbReference type="Gene3D" id="3.40.50.1360">
    <property type="match status" value="1"/>
</dbReference>
<dbReference type="HAMAP" id="MF_00170">
    <property type="entry name" value="Rib_5P_isom_A"/>
    <property type="match status" value="1"/>
</dbReference>
<dbReference type="InterPro" id="IPR037171">
    <property type="entry name" value="NagB/RpiA_transferase-like"/>
</dbReference>
<dbReference type="InterPro" id="IPR020672">
    <property type="entry name" value="Ribose5P_isomerase_typA_subgr"/>
</dbReference>
<dbReference type="InterPro" id="IPR004788">
    <property type="entry name" value="Ribose5P_isomerase_type_A"/>
</dbReference>
<dbReference type="NCBIfam" id="NF001924">
    <property type="entry name" value="PRK00702.1"/>
    <property type="match status" value="1"/>
</dbReference>
<dbReference type="NCBIfam" id="TIGR00021">
    <property type="entry name" value="rpiA"/>
    <property type="match status" value="1"/>
</dbReference>
<dbReference type="PANTHER" id="PTHR11934">
    <property type="entry name" value="RIBOSE-5-PHOSPHATE ISOMERASE"/>
    <property type="match status" value="1"/>
</dbReference>
<dbReference type="PANTHER" id="PTHR11934:SF0">
    <property type="entry name" value="RIBOSE-5-PHOSPHATE ISOMERASE"/>
    <property type="match status" value="1"/>
</dbReference>
<dbReference type="Pfam" id="PF06026">
    <property type="entry name" value="Rib_5-P_isom_A"/>
    <property type="match status" value="1"/>
</dbReference>
<dbReference type="SUPFAM" id="SSF75445">
    <property type="entry name" value="D-ribose-5-phosphate isomerase (RpiA), lid domain"/>
    <property type="match status" value="1"/>
</dbReference>
<dbReference type="SUPFAM" id="SSF100950">
    <property type="entry name" value="NagB/RpiA/CoA transferase-like"/>
    <property type="match status" value="1"/>
</dbReference>
<feature type="chain" id="PRO_0000158483" description="Ribose-5-phosphate isomerase A">
    <location>
        <begin position="1"/>
        <end position="232"/>
    </location>
</feature>
<feature type="active site" description="Proton acceptor" evidence="1">
    <location>
        <position position="108"/>
    </location>
</feature>
<feature type="binding site" evidence="1">
    <location>
        <begin position="29"/>
        <end position="32"/>
    </location>
    <ligand>
        <name>substrate</name>
    </ligand>
</feature>
<feature type="binding site" evidence="1">
    <location>
        <begin position="86"/>
        <end position="89"/>
    </location>
    <ligand>
        <name>substrate</name>
    </ligand>
</feature>
<feature type="binding site" evidence="1">
    <location>
        <begin position="99"/>
        <end position="102"/>
    </location>
    <ligand>
        <name>substrate</name>
    </ligand>
</feature>
<feature type="binding site" evidence="1">
    <location>
        <position position="126"/>
    </location>
    <ligand>
        <name>substrate</name>
    </ligand>
</feature>
<comment type="function">
    <text evidence="1">Catalyzes the reversible conversion of ribose-5-phosphate to ribulose 5-phosphate.</text>
</comment>
<comment type="catalytic activity">
    <reaction evidence="1">
        <text>aldehydo-D-ribose 5-phosphate = D-ribulose 5-phosphate</text>
        <dbReference type="Rhea" id="RHEA:14657"/>
        <dbReference type="ChEBI" id="CHEBI:58121"/>
        <dbReference type="ChEBI" id="CHEBI:58273"/>
        <dbReference type="EC" id="5.3.1.6"/>
    </reaction>
</comment>
<comment type="pathway">
    <text evidence="1">Carbohydrate degradation; pentose phosphate pathway; D-ribose 5-phosphate from D-ribulose 5-phosphate (non-oxidative stage): step 1/1.</text>
</comment>
<comment type="subunit">
    <text evidence="1">Homodimer.</text>
</comment>
<comment type="similarity">
    <text evidence="1">Belongs to the ribose 5-phosphate isomerase family.</text>
</comment>
<comment type="sequence caution" evidence="2">
    <conflict type="erroneous initiation">
        <sequence resource="EMBL-CDS" id="BAD79129"/>
    </conflict>
</comment>
<proteinExistence type="inferred from homology"/>
<name>RPIA_SYNP6</name>
<accession>Q5N3J1</accession>
<organism>
    <name type="scientific">Synechococcus sp. (strain ATCC 27144 / PCC 6301 / SAUG 1402/1)</name>
    <name type="common">Anacystis nidulans</name>
    <dbReference type="NCBI Taxonomy" id="269084"/>
    <lineage>
        <taxon>Bacteria</taxon>
        <taxon>Bacillati</taxon>
        <taxon>Cyanobacteriota</taxon>
        <taxon>Cyanophyceae</taxon>
        <taxon>Synechococcales</taxon>
        <taxon>Synechococcaceae</taxon>
        <taxon>Synechococcus</taxon>
    </lineage>
</organism>
<protein>
    <recommendedName>
        <fullName evidence="1">Ribose-5-phosphate isomerase A</fullName>
        <ecNumber evidence="1">5.3.1.6</ecNumber>
    </recommendedName>
    <alternativeName>
        <fullName evidence="1">Phosphoriboisomerase A</fullName>
        <shortName evidence="1">PRI</shortName>
    </alternativeName>
</protein>
<keyword id="KW-0413">Isomerase</keyword>
<gene>
    <name evidence="1" type="primary">rpiA</name>
    <name type="ordered locus">syc0939_d</name>
</gene>
<sequence>MDPVTHMKHEVAKAAASRVQSGMVVGLGSGSTAALMIQYLGDRVRNGELTNIQAVPTSFQSSVLANEYGIPLTTLNEVDRIDIAIDGADEVDPQRNLIKGGGACHTREKLVDARAEQFIVVVDSSKLVEALGTTFLLPVEVLPEAYIQVGKALEKLGGKPELRMAVKKAGPVVTDQGNLVLDVKFDRIDQPAELEKAINNIPGVLENGLFVGLTDLVLVGEVDGDRVSVREF</sequence>
<reference key="1">
    <citation type="journal article" date="2007" name="Photosyn. Res.">
        <title>Complete nucleotide sequence of the freshwater unicellular cyanobacterium Synechococcus elongatus PCC 6301 chromosome: gene content and organization.</title>
        <authorList>
            <person name="Sugita C."/>
            <person name="Ogata K."/>
            <person name="Shikata M."/>
            <person name="Jikuya H."/>
            <person name="Takano J."/>
            <person name="Furumichi M."/>
            <person name="Kanehisa M."/>
            <person name="Omata T."/>
            <person name="Sugiura M."/>
            <person name="Sugita M."/>
        </authorList>
    </citation>
    <scope>NUCLEOTIDE SEQUENCE [LARGE SCALE GENOMIC DNA]</scope>
    <source>
        <strain>ATCC 27144 / PCC 6301 / SAUG 1402/1</strain>
    </source>
</reference>